<evidence type="ECO:0000255" key="1">
    <source>
        <dbReference type="HAMAP-Rule" id="MF_01347"/>
    </source>
</evidence>
<evidence type="ECO:0000305" key="2"/>
<evidence type="ECO:0007829" key="3">
    <source>
        <dbReference type="PDB" id="1FX0"/>
    </source>
</evidence>
<evidence type="ECO:0007829" key="4">
    <source>
        <dbReference type="PDB" id="6FKF"/>
    </source>
</evidence>
<dbReference type="EC" id="7.1.2.2" evidence="1"/>
<dbReference type="EMBL" id="J01441">
    <property type="protein sequence ID" value="AAA84626.1"/>
    <property type="molecule type" value="Genomic_DNA"/>
</dbReference>
<dbReference type="EMBL" id="U23082">
    <property type="protein sequence ID" value="AAB60294.1"/>
    <property type="molecule type" value="Genomic_DNA"/>
</dbReference>
<dbReference type="EMBL" id="AF528861">
    <property type="protein sequence ID" value="AAQ09249.1"/>
    <property type="molecule type" value="Genomic_DNA"/>
</dbReference>
<dbReference type="EMBL" id="AJ400848">
    <property type="protein sequence ID" value="CAB88736.1"/>
    <property type="molecule type" value="Genomic_DNA"/>
</dbReference>
<dbReference type="PIR" id="A01028">
    <property type="entry name" value="PWSPB"/>
</dbReference>
<dbReference type="RefSeq" id="NP_054943.1">
    <property type="nucleotide sequence ID" value="NC_002202.1"/>
</dbReference>
<dbReference type="PDB" id="1FX0">
    <property type="method" value="X-ray"/>
    <property type="resolution" value="3.20 A"/>
    <property type="chains" value="B=1-498"/>
</dbReference>
<dbReference type="PDB" id="1KMH">
    <property type="method" value="X-ray"/>
    <property type="resolution" value="3.40 A"/>
    <property type="chains" value="B=1-498"/>
</dbReference>
<dbReference type="PDB" id="6FKF">
    <property type="method" value="EM"/>
    <property type="resolution" value="3.10 A"/>
    <property type="chains" value="B/D/F=1-498"/>
</dbReference>
<dbReference type="PDB" id="6FKH">
    <property type="method" value="EM"/>
    <property type="resolution" value="4.20 A"/>
    <property type="chains" value="B/D/F=1-498"/>
</dbReference>
<dbReference type="PDB" id="6FKI">
    <property type="method" value="EM"/>
    <property type="resolution" value="4.30 A"/>
    <property type="chains" value="B/D/F=1-498"/>
</dbReference>
<dbReference type="PDB" id="6VM1">
    <property type="method" value="EM"/>
    <property type="resolution" value="7.90 A"/>
    <property type="chains" value="D/E/F=1-498"/>
</dbReference>
<dbReference type="PDB" id="6VM4">
    <property type="method" value="EM"/>
    <property type="resolution" value="7.08 A"/>
    <property type="chains" value="D/E/F=1-498"/>
</dbReference>
<dbReference type="PDB" id="6VMB">
    <property type="method" value="EM"/>
    <property type="resolution" value="5.23 A"/>
    <property type="chains" value="D/E/F=1-498"/>
</dbReference>
<dbReference type="PDB" id="6VMD">
    <property type="method" value="EM"/>
    <property type="resolution" value="4.53 A"/>
    <property type="chains" value="D/E/F=1-498"/>
</dbReference>
<dbReference type="PDB" id="6VMG">
    <property type="method" value="EM"/>
    <property type="resolution" value="6.46 A"/>
    <property type="chains" value="D/E/F=1-498"/>
</dbReference>
<dbReference type="PDB" id="6VOF">
    <property type="method" value="EM"/>
    <property type="resolution" value="4.51 A"/>
    <property type="chains" value="D/E/F=1-498"/>
</dbReference>
<dbReference type="PDB" id="6VOG">
    <property type="method" value="EM"/>
    <property type="resolution" value="4.35 A"/>
    <property type="chains" value="D/E/F=1-498"/>
</dbReference>
<dbReference type="PDB" id="6VOH">
    <property type="method" value="EM"/>
    <property type="resolution" value="4.16 A"/>
    <property type="chains" value="D/E/F=1-498"/>
</dbReference>
<dbReference type="PDB" id="6VOI">
    <property type="method" value="EM"/>
    <property type="resolution" value="4.03 A"/>
    <property type="chains" value="D/E/F=1-498"/>
</dbReference>
<dbReference type="PDB" id="6VOJ">
    <property type="method" value="EM"/>
    <property type="resolution" value="4.34 A"/>
    <property type="chains" value="D/E/F=1-498"/>
</dbReference>
<dbReference type="PDB" id="6VOK">
    <property type="method" value="EM"/>
    <property type="resolution" value="3.85 A"/>
    <property type="chains" value="D/E/F=1-498"/>
</dbReference>
<dbReference type="PDB" id="6VOL">
    <property type="method" value="EM"/>
    <property type="resolution" value="4.06 A"/>
    <property type="chains" value="D/E/F=1-498"/>
</dbReference>
<dbReference type="PDB" id="6VOM">
    <property type="method" value="EM"/>
    <property type="resolution" value="3.60 A"/>
    <property type="chains" value="D/E/F=1-498"/>
</dbReference>
<dbReference type="PDB" id="6VON">
    <property type="method" value="EM"/>
    <property type="resolution" value="3.35 A"/>
    <property type="chains" value="D/E/F=1-498"/>
</dbReference>
<dbReference type="PDB" id="6VOO">
    <property type="method" value="EM"/>
    <property type="resolution" value="3.05 A"/>
    <property type="chains" value="D/E/F=1-498"/>
</dbReference>
<dbReference type="PDBsum" id="1FX0"/>
<dbReference type="PDBsum" id="1KMH"/>
<dbReference type="PDBsum" id="6FKF"/>
<dbReference type="PDBsum" id="6FKH"/>
<dbReference type="PDBsum" id="6FKI"/>
<dbReference type="PDBsum" id="6VM1"/>
<dbReference type="PDBsum" id="6VM4"/>
<dbReference type="PDBsum" id="6VMB"/>
<dbReference type="PDBsum" id="6VMD"/>
<dbReference type="PDBsum" id="6VMG"/>
<dbReference type="PDBsum" id="6VOF"/>
<dbReference type="PDBsum" id="6VOG"/>
<dbReference type="PDBsum" id="6VOH"/>
<dbReference type="PDBsum" id="6VOI"/>
<dbReference type="PDBsum" id="6VOJ"/>
<dbReference type="PDBsum" id="6VOK"/>
<dbReference type="PDBsum" id="6VOL"/>
<dbReference type="PDBsum" id="6VOM"/>
<dbReference type="PDBsum" id="6VON"/>
<dbReference type="PDBsum" id="6VOO"/>
<dbReference type="EMDB" id="EMD-21235"/>
<dbReference type="EMDB" id="EMD-21238"/>
<dbReference type="EMDB" id="EMD-21239"/>
<dbReference type="EMDB" id="EMD-21240"/>
<dbReference type="EMDB" id="EMD-21241"/>
<dbReference type="EMDB" id="EMD-21262"/>
<dbReference type="EMDB" id="EMD-21263"/>
<dbReference type="EMDB" id="EMD-21264"/>
<dbReference type="EMDB" id="EMD-21265"/>
<dbReference type="EMDB" id="EMD-21266"/>
<dbReference type="EMDB" id="EMD-21267"/>
<dbReference type="EMDB" id="EMD-21268"/>
<dbReference type="EMDB" id="EMD-21269"/>
<dbReference type="EMDB" id="EMD-21270"/>
<dbReference type="EMDB" id="EMD-21271"/>
<dbReference type="EMDB" id="EMD-4270"/>
<dbReference type="EMDB" id="EMD-4271"/>
<dbReference type="EMDB" id="EMD-4272"/>
<dbReference type="SASBDB" id="P00825"/>
<dbReference type="SMR" id="P00825"/>
<dbReference type="FunCoup" id="P00825">
    <property type="interactions" value="277"/>
</dbReference>
<dbReference type="IntAct" id="P00825">
    <property type="interactions" value="1"/>
</dbReference>
<dbReference type="MINT" id="P00825"/>
<dbReference type="STRING" id="3562.P00825"/>
<dbReference type="ChEMBL" id="CHEMBL2366567"/>
<dbReference type="GeneID" id="2715576"/>
<dbReference type="KEGG" id="soe:2715576"/>
<dbReference type="InParanoid" id="P00825"/>
<dbReference type="OrthoDB" id="149879at2759"/>
<dbReference type="EvolutionaryTrace" id="P00825"/>
<dbReference type="PRO" id="PR:P00825"/>
<dbReference type="Proteomes" id="UP001155700">
    <property type="component" value="Chloroplast Pltd"/>
</dbReference>
<dbReference type="GO" id="GO:0009535">
    <property type="term" value="C:chloroplast thylakoid membrane"/>
    <property type="evidence" value="ECO:0007669"/>
    <property type="project" value="UniProtKB-SubCell"/>
</dbReference>
<dbReference type="GO" id="GO:0005739">
    <property type="term" value="C:mitochondrion"/>
    <property type="evidence" value="ECO:0007669"/>
    <property type="project" value="GOC"/>
</dbReference>
<dbReference type="GO" id="GO:0045259">
    <property type="term" value="C:proton-transporting ATP synthase complex"/>
    <property type="evidence" value="ECO:0007669"/>
    <property type="project" value="UniProtKB-KW"/>
</dbReference>
<dbReference type="GO" id="GO:0005524">
    <property type="term" value="F:ATP binding"/>
    <property type="evidence" value="ECO:0007669"/>
    <property type="project" value="UniProtKB-UniRule"/>
</dbReference>
<dbReference type="GO" id="GO:0016887">
    <property type="term" value="F:ATP hydrolysis activity"/>
    <property type="evidence" value="ECO:0007669"/>
    <property type="project" value="InterPro"/>
</dbReference>
<dbReference type="GO" id="GO:0046933">
    <property type="term" value="F:proton-transporting ATP synthase activity, rotational mechanism"/>
    <property type="evidence" value="ECO:0007669"/>
    <property type="project" value="UniProtKB-UniRule"/>
</dbReference>
<dbReference type="GO" id="GO:0042776">
    <property type="term" value="P:proton motive force-driven mitochondrial ATP synthesis"/>
    <property type="evidence" value="ECO:0000318"/>
    <property type="project" value="GO_Central"/>
</dbReference>
<dbReference type="CDD" id="cd18110">
    <property type="entry name" value="ATP-synt_F1_beta_C"/>
    <property type="match status" value="1"/>
</dbReference>
<dbReference type="CDD" id="cd18115">
    <property type="entry name" value="ATP-synt_F1_beta_N"/>
    <property type="match status" value="1"/>
</dbReference>
<dbReference type="CDD" id="cd01133">
    <property type="entry name" value="F1-ATPase_beta_CD"/>
    <property type="match status" value="1"/>
</dbReference>
<dbReference type="FunFam" id="1.10.1140.10:FF:000001">
    <property type="entry name" value="ATP synthase subunit beta"/>
    <property type="match status" value="1"/>
</dbReference>
<dbReference type="FunFam" id="3.40.50.12240:FF:000006">
    <property type="entry name" value="ATP synthase subunit beta"/>
    <property type="match status" value="1"/>
</dbReference>
<dbReference type="FunFam" id="3.40.50.300:FF:000004">
    <property type="entry name" value="ATP synthase subunit beta"/>
    <property type="match status" value="1"/>
</dbReference>
<dbReference type="FunFam" id="2.40.10.170:FF:000002">
    <property type="entry name" value="ATP synthase subunit beta, chloroplastic"/>
    <property type="match status" value="1"/>
</dbReference>
<dbReference type="Gene3D" id="2.40.10.170">
    <property type="match status" value="1"/>
</dbReference>
<dbReference type="Gene3D" id="1.10.1140.10">
    <property type="entry name" value="Bovine Mitochondrial F1-atpase, Atp Synthase Beta Chain, Chain D, domain 3"/>
    <property type="match status" value="1"/>
</dbReference>
<dbReference type="Gene3D" id="3.40.50.300">
    <property type="entry name" value="P-loop containing nucleotide triphosphate hydrolases"/>
    <property type="match status" value="1"/>
</dbReference>
<dbReference type="HAMAP" id="MF_01347">
    <property type="entry name" value="ATP_synth_beta_bact"/>
    <property type="match status" value="1"/>
</dbReference>
<dbReference type="InterPro" id="IPR003593">
    <property type="entry name" value="AAA+_ATPase"/>
</dbReference>
<dbReference type="InterPro" id="IPR055190">
    <property type="entry name" value="ATP-synt_VA_C"/>
</dbReference>
<dbReference type="InterPro" id="IPR005722">
    <property type="entry name" value="ATP_synth_F1_bsu"/>
</dbReference>
<dbReference type="InterPro" id="IPR020003">
    <property type="entry name" value="ATPase_a/bsu_AS"/>
</dbReference>
<dbReference type="InterPro" id="IPR050053">
    <property type="entry name" value="ATPase_alpha/beta_chains"/>
</dbReference>
<dbReference type="InterPro" id="IPR004100">
    <property type="entry name" value="ATPase_F1/V1/A1_a/bsu_N"/>
</dbReference>
<dbReference type="InterPro" id="IPR036121">
    <property type="entry name" value="ATPase_F1/V1/A1_a/bsu_N_sf"/>
</dbReference>
<dbReference type="InterPro" id="IPR000194">
    <property type="entry name" value="ATPase_F1/V1/A1_a/bsu_nucl-bd"/>
</dbReference>
<dbReference type="InterPro" id="IPR024034">
    <property type="entry name" value="ATPase_F1/V1_b/a_C"/>
</dbReference>
<dbReference type="InterPro" id="IPR027417">
    <property type="entry name" value="P-loop_NTPase"/>
</dbReference>
<dbReference type="NCBIfam" id="TIGR01039">
    <property type="entry name" value="atpD"/>
    <property type="match status" value="1"/>
</dbReference>
<dbReference type="PANTHER" id="PTHR15184">
    <property type="entry name" value="ATP SYNTHASE"/>
    <property type="match status" value="1"/>
</dbReference>
<dbReference type="PANTHER" id="PTHR15184:SF71">
    <property type="entry name" value="ATP SYNTHASE SUBUNIT BETA, MITOCHONDRIAL"/>
    <property type="match status" value="1"/>
</dbReference>
<dbReference type="Pfam" id="PF00006">
    <property type="entry name" value="ATP-synt_ab"/>
    <property type="match status" value="1"/>
</dbReference>
<dbReference type="Pfam" id="PF02874">
    <property type="entry name" value="ATP-synt_ab_N"/>
    <property type="match status" value="1"/>
</dbReference>
<dbReference type="Pfam" id="PF22919">
    <property type="entry name" value="ATP-synt_VA_C"/>
    <property type="match status" value="1"/>
</dbReference>
<dbReference type="SMART" id="SM00382">
    <property type="entry name" value="AAA"/>
    <property type="match status" value="1"/>
</dbReference>
<dbReference type="SUPFAM" id="SSF47917">
    <property type="entry name" value="C-terminal domain of alpha and beta subunits of F1 ATP synthase"/>
    <property type="match status" value="1"/>
</dbReference>
<dbReference type="SUPFAM" id="SSF50615">
    <property type="entry name" value="N-terminal domain of alpha and beta subunits of F1 ATP synthase"/>
    <property type="match status" value="1"/>
</dbReference>
<dbReference type="SUPFAM" id="SSF52540">
    <property type="entry name" value="P-loop containing nucleoside triphosphate hydrolases"/>
    <property type="match status" value="1"/>
</dbReference>
<dbReference type="PROSITE" id="PS00152">
    <property type="entry name" value="ATPASE_ALPHA_BETA"/>
    <property type="match status" value="1"/>
</dbReference>
<name>ATPB_SPIOL</name>
<protein>
    <recommendedName>
        <fullName evidence="1">ATP synthase subunit beta, chloroplastic</fullName>
        <ecNumber evidence="1">7.1.2.2</ecNumber>
    </recommendedName>
    <alternativeName>
        <fullName evidence="1">ATP synthase F1 sector subunit beta</fullName>
    </alternativeName>
    <alternativeName>
        <fullName evidence="1">F-ATPase subunit beta</fullName>
    </alternativeName>
</protein>
<geneLocation type="chloroplast"/>
<proteinExistence type="evidence at protein level"/>
<gene>
    <name evidence="1" type="primary">atpB</name>
</gene>
<sequence>MRINPTTSDPGVSTLEKKNLGRIAQIIGPVLDVAFPPGKMPNIYNALIVKGRDTAGQPMNVTCEVQQLLGNNRVRAVAMSATDGLTRGMEVIDTGAPLSVPVGGATLGRIFNVLGEPVDNLGPVDTRTTSPIHRSAPAFTQLDTKLSIFETGIKVVDLLAPYRRGGKIGLFGGAGVGKTVLIMELINNIAKAHGGVSVFGGVGERTREGNDLYMEMKESGVINEQNIAESKVALVYGQMNEPPGARMRVGLTALTMAEYFRDVNEQDVLLFIDNIFRFVQAGSEVSALLGRMPSAVGYQPTLSTEMGSLQERITSTKEGSITSIQAVYVPADDLTDPAPATTFAHLDATTVLSRGLAAKGIYPAVDPLDSTSTMLQPRIVGEEHYEIAQRVKETLQRYKELQDIIAILGLDELSEEDRLTVARARKIERFLSQPFFVAEVFTGSPGKYVGLAETIRGFQLILSGELDSLPEQAFYLVGNIDEATAKAMNLEMESKLKK</sequence>
<reference key="1">
    <citation type="journal article" date="1982" name="Proc. Natl. Acad. Sci. U.S.A.">
        <title>Structures of the genes for the beta and epsilon subunits of spinach chloroplast ATPase indicate a dicistronic mRNA and an overlapping translation stop/start signal.</title>
        <authorList>
            <person name="Zurawski G."/>
            <person name="Bottomley W."/>
            <person name="Whitfeld P.R."/>
        </authorList>
    </citation>
    <scope>NUCLEOTIDE SEQUENCE [GENOMIC DNA]</scope>
</reference>
<reference key="2">
    <citation type="journal article" date="1992" name="FEBS Lett.">
        <title>Over-expression and refolding of beta-subunit from the chloroplast ATP synthase.</title>
        <authorList>
            <person name="Chen Z."/>
            <person name="Wu I."/>
            <person name="Richter M.L."/>
            <person name="Gegenheimer P."/>
        </authorList>
    </citation>
    <scope>NUCLEOTIDE SEQUENCE [GENOMIC DNA]</scope>
</reference>
<reference key="3">
    <citation type="submission" date="2002-07" db="EMBL/GenBank/DDBJ databases">
        <title>Parsing out signal and noise for seed-plant phylogenetic inference.</title>
        <authorList>
            <person name="Graham S.W."/>
            <person name="Rai H.S."/>
            <person name="Ikegami K."/>
            <person name="Reeves P.A."/>
            <person name="Olmstead R.G."/>
        </authorList>
    </citation>
    <scope>NUCLEOTIDE SEQUENCE [GENOMIC DNA]</scope>
</reference>
<reference key="4">
    <citation type="journal article" date="2001" name="Plant Mol. Biol.">
        <title>The plastid chromosome of spinach (Spinacia oleracea): complete nucleotide sequence and gene organization.</title>
        <authorList>
            <person name="Schmitz-Linneweber C."/>
            <person name="Maier R.M."/>
            <person name="Alcaraz J.-P."/>
            <person name="Cottet A."/>
            <person name="Herrmann R.G."/>
            <person name="Mache R."/>
        </authorList>
    </citation>
    <scope>NUCLEOTIDE SEQUENCE [LARGE SCALE GENOMIC DNA]</scope>
    <source>
        <strain>cv. Geant d'hiver</strain>
        <strain>cv. Monatol</strain>
    </source>
</reference>
<reference key="5">
    <citation type="journal article" date="1992" name="FEBS Lett.">
        <title>Photolabeling of the phosphate binding site of chloroplast coupling factor 1 with [32P]azidonitrophenyl phosphate.</title>
        <authorList>
            <person name="Michel L."/>
            <person name="Garin J."/>
            <person name="Girault G."/>
            <person name="Vignais P.V."/>
        </authorList>
    </citation>
    <scope>NUCLEOTIDE SEQUENCE [GENOMIC DNA] OF 313-354</scope>
</reference>
<reference key="6">
    <citation type="journal article" date="1991" name="Eur. J. Biochem.">
        <title>Inactivation of chloroplast H(+)-ATPase by modification of Lys beta 359, Lys alpha 176 and Lys alpha 266.</title>
        <authorList>
            <person name="Horbach M."/>
            <person name="Meyer H.E."/>
            <person name="Bickel-Sandkoetter S."/>
        </authorList>
    </citation>
    <scope>CHARACTERIZATION</scope>
</reference>
<reference key="7">
    <citation type="journal article" date="2001" name="J. Biol. Chem.">
        <title>The structure of the chloroplast F1-ATPase at 3.2 A resolution.</title>
        <authorList>
            <person name="Groth G."/>
            <person name="Pohl E."/>
        </authorList>
    </citation>
    <scope>X-RAY CRYSTALLOGRAPHY (3.4 ANGSTROMS) OF 19-485 IN COMPLEX WITH ALPHA CHAIN</scope>
</reference>
<comment type="function">
    <text>Produces ATP from ADP in the presence of a proton gradient across the membrane. The catalytic sites are hosted primarily by the beta subunits.</text>
</comment>
<comment type="catalytic activity">
    <reaction evidence="1">
        <text>ATP + H2O + 4 H(+)(in) = ADP + phosphate + 5 H(+)(out)</text>
        <dbReference type="Rhea" id="RHEA:57720"/>
        <dbReference type="ChEBI" id="CHEBI:15377"/>
        <dbReference type="ChEBI" id="CHEBI:15378"/>
        <dbReference type="ChEBI" id="CHEBI:30616"/>
        <dbReference type="ChEBI" id="CHEBI:43474"/>
        <dbReference type="ChEBI" id="CHEBI:456216"/>
        <dbReference type="EC" id="7.1.2.2"/>
    </reaction>
</comment>
<comment type="subunit">
    <text evidence="1">F-type ATPases have 2 components, CF(1) - the catalytic core - and CF(0) - the membrane proton channel. CF(1) has five subunits: alpha(3), beta(3), gamma(1), delta(1), epsilon(1). CF(0) has four main subunits: a(1), b(1), b'(1) and c(9-12).</text>
</comment>
<comment type="subcellular location">
    <subcellularLocation>
        <location evidence="1">Plastid</location>
        <location evidence="1">Chloroplast thylakoid membrane</location>
        <topology evidence="1">Peripheral membrane protein</topology>
    </subcellularLocation>
</comment>
<comment type="similarity">
    <text evidence="1">Belongs to the ATPase alpha/beta chains family.</text>
</comment>
<keyword id="KW-0002">3D-structure</keyword>
<keyword id="KW-0066">ATP synthesis</keyword>
<keyword id="KW-0067">ATP-binding</keyword>
<keyword id="KW-0139">CF(1)</keyword>
<keyword id="KW-0150">Chloroplast</keyword>
<keyword id="KW-0375">Hydrogen ion transport</keyword>
<keyword id="KW-0406">Ion transport</keyword>
<keyword id="KW-0472">Membrane</keyword>
<keyword id="KW-0547">Nucleotide-binding</keyword>
<keyword id="KW-0934">Plastid</keyword>
<keyword id="KW-1185">Reference proteome</keyword>
<keyword id="KW-0793">Thylakoid</keyword>
<keyword id="KW-1278">Translocase</keyword>
<keyword id="KW-0813">Transport</keyword>
<organism>
    <name type="scientific">Spinacia oleracea</name>
    <name type="common">Spinach</name>
    <dbReference type="NCBI Taxonomy" id="3562"/>
    <lineage>
        <taxon>Eukaryota</taxon>
        <taxon>Viridiplantae</taxon>
        <taxon>Streptophyta</taxon>
        <taxon>Embryophyta</taxon>
        <taxon>Tracheophyta</taxon>
        <taxon>Spermatophyta</taxon>
        <taxon>Magnoliopsida</taxon>
        <taxon>eudicotyledons</taxon>
        <taxon>Gunneridae</taxon>
        <taxon>Pentapetalae</taxon>
        <taxon>Caryophyllales</taxon>
        <taxon>Chenopodiaceae</taxon>
        <taxon>Chenopodioideae</taxon>
        <taxon>Anserineae</taxon>
        <taxon>Spinacia</taxon>
    </lineage>
</organism>
<feature type="chain" id="PRO_0000144550" description="ATP synthase subunit beta, chloroplastic">
    <location>
        <begin position="1"/>
        <end position="498"/>
    </location>
</feature>
<feature type="binding site" evidence="1">
    <location>
        <begin position="172"/>
        <end position="179"/>
    </location>
    <ligand>
        <name>ATP</name>
        <dbReference type="ChEBI" id="CHEBI:30616"/>
    </ligand>
</feature>
<feature type="sequence conflict" description="In Ref. 1; AAA84626." evidence="2" ref="1">
    <original>D</original>
    <variation>N</variation>
    <location>
        <position position="32"/>
    </location>
</feature>
<feature type="sequence conflict" description="In Ref. 1; AAA84626." evidence="2" ref="1">
    <original>A</original>
    <variation>P</variation>
    <location>
        <position position="105"/>
    </location>
</feature>
<feature type="sequence conflict" description="In Ref. 1; AAA84626." evidence="2" ref="1">
    <original>G</original>
    <variation>R</variation>
    <location>
        <position position="122"/>
    </location>
</feature>
<feature type="sequence conflict" description="In Ref. 1; AAA84626." evidence="2" ref="1">
    <original>D</original>
    <variation>N</variation>
    <location>
        <position position="157"/>
    </location>
</feature>
<feature type="strand" evidence="4">
    <location>
        <begin position="19"/>
        <end position="27"/>
    </location>
</feature>
<feature type="strand" evidence="4">
    <location>
        <begin position="30"/>
        <end position="34"/>
    </location>
</feature>
<feature type="strand" evidence="4">
    <location>
        <begin position="46"/>
        <end position="52"/>
    </location>
</feature>
<feature type="strand" evidence="4">
    <location>
        <begin position="54"/>
        <end position="56"/>
    </location>
</feature>
<feature type="strand" evidence="4">
    <location>
        <begin position="58"/>
        <end position="70"/>
    </location>
</feature>
<feature type="strand" evidence="4">
    <location>
        <begin position="73"/>
        <end position="80"/>
    </location>
</feature>
<feature type="strand" evidence="4">
    <location>
        <begin position="90"/>
        <end position="93"/>
    </location>
</feature>
<feature type="strand" evidence="4">
    <location>
        <begin position="95"/>
        <end position="97"/>
    </location>
</feature>
<feature type="strand" evidence="4">
    <location>
        <begin position="99"/>
        <end position="101"/>
    </location>
</feature>
<feature type="turn" evidence="3">
    <location>
        <begin position="105"/>
        <end position="108"/>
    </location>
</feature>
<feature type="strand" evidence="4">
    <location>
        <begin position="113"/>
        <end position="115"/>
    </location>
</feature>
<feature type="strand" evidence="4">
    <location>
        <begin position="119"/>
        <end position="121"/>
    </location>
</feature>
<feature type="strand" evidence="4">
    <location>
        <begin position="129"/>
        <end position="132"/>
    </location>
</feature>
<feature type="helix" evidence="3">
    <location>
        <begin position="139"/>
        <end position="141"/>
    </location>
</feature>
<feature type="helix" evidence="4">
    <location>
        <begin position="154"/>
        <end position="158"/>
    </location>
</feature>
<feature type="strand" evidence="4">
    <location>
        <begin position="167"/>
        <end position="171"/>
    </location>
</feature>
<feature type="strand" evidence="4">
    <location>
        <begin position="174"/>
        <end position="177"/>
    </location>
</feature>
<feature type="helix" evidence="4">
    <location>
        <begin position="178"/>
        <end position="191"/>
    </location>
</feature>
<feature type="strand" evidence="4">
    <location>
        <begin position="196"/>
        <end position="204"/>
    </location>
</feature>
<feature type="helix" evidence="4">
    <location>
        <begin position="206"/>
        <end position="218"/>
    </location>
</feature>
<feature type="strand" evidence="4">
    <location>
        <begin position="224"/>
        <end position="226"/>
    </location>
</feature>
<feature type="strand" evidence="4">
    <location>
        <begin position="231"/>
        <end position="238"/>
    </location>
</feature>
<feature type="helix" evidence="4">
    <location>
        <begin position="243"/>
        <end position="262"/>
    </location>
</feature>
<feature type="strand" evidence="4">
    <location>
        <begin position="267"/>
        <end position="273"/>
    </location>
</feature>
<feature type="helix" evidence="4">
    <location>
        <begin position="275"/>
        <end position="288"/>
    </location>
</feature>
<feature type="helix" evidence="4">
    <location>
        <begin position="295"/>
        <end position="297"/>
    </location>
</feature>
<feature type="helix" evidence="4">
    <location>
        <begin position="302"/>
        <end position="310"/>
    </location>
</feature>
<feature type="strand" evidence="4">
    <location>
        <begin position="311"/>
        <end position="313"/>
    </location>
</feature>
<feature type="strand" evidence="4">
    <location>
        <begin position="315"/>
        <end position="318"/>
    </location>
</feature>
<feature type="strand" evidence="4">
    <location>
        <begin position="320"/>
        <end position="326"/>
    </location>
</feature>
<feature type="helix" evidence="4">
    <location>
        <begin position="330"/>
        <end position="332"/>
    </location>
</feature>
<feature type="strand" evidence="3">
    <location>
        <begin position="334"/>
        <end position="336"/>
    </location>
</feature>
<feature type="helix" evidence="4">
    <location>
        <begin position="337"/>
        <end position="345"/>
    </location>
</feature>
<feature type="strand" evidence="4">
    <location>
        <begin position="347"/>
        <end position="352"/>
    </location>
</feature>
<feature type="helix" evidence="4">
    <location>
        <begin position="354"/>
        <end position="359"/>
    </location>
</feature>
<feature type="turn" evidence="4">
    <location>
        <begin position="367"/>
        <end position="369"/>
    </location>
</feature>
<feature type="strand" evidence="4">
    <location>
        <begin position="371"/>
        <end position="374"/>
    </location>
</feature>
<feature type="turn" evidence="4">
    <location>
        <begin position="377"/>
        <end position="379"/>
    </location>
</feature>
<feature type="helix" evidence="4">
    <location>
        <begin position="382"/>
        <end position="400"/>
    </location>
</feature>
<feature type="helix" evidence="4">
    <location>
        <begin position="402"/>
        <end position="405"/>
    </location>
</feature>
<feature type="turn" evidence="4">
    <location>
        <begin position="406"/>
        <end position="408"/>
    </location>
</feature>
<feature type="helix" evidence="4">
    <location>
        <begin position="410"/>
        <end position="412"/>
    </location>
</feature>
<feature type="helix" evidence="4">
    <location>
        <begin position="415"/>
        <end position="430"/>
    </location>
</feature>
<feature type="helix" evidence="4">
    <location>
        <begin position="436"/>
        <end position="438"/>
    </location>
</feature>
<feature type="turn" evidence="4">
    <location>
        <begin position="439"/>
        <end position="442"/>
    </location>
</feature>
<feature type="helix" evidence="4">
    <location>
        <begin position="451"/>
        <end position="462"/>
    </location>
</feature>
<feature type="turn" evidence="4">
    <location>
        <begin position="463"/>
        <end position="468"/>
    </location>
</feature>
<feature type="helix" evidence="4">
    <location>
        <begin position="471"/>
        <end position="473"/>
    </location>
</feature>
<feature type="turn" evidence="3">
    <location>
        <begin position="474"/>
        <end position="476"/>
    </location>
</feature>
<feature type="helix" evidence="4">
    <location>
        <begin position="480"/>
        <end position="494"/>
    </location>
</feature>
<accession>P00825</accession>
<accession>Q6EYW8</accession>